<proteinExistence type="inferred from homology"/>
<gene>
    <name evidence="1" type="primary">fumC</name>
    <name type="ordered locus">SF1634</name>
    <name type="ordered locus">S1765</name>
</gene>
<accession>Q83ML8</accession>
<reference key="1">
    <citation type="journal article" date="2002" name="Nucleic Acids Res.">
        <title>Genome sequence of Shigella flexneri 2a: insights into pathogenicity through comparison with genomes of Escherichia coli K12 and O157.</title>
        <authorList>
            <person name="Jin Q."/>
            <person name="Yuan Z."/>
            <person name="Xu J."/>
            <person name="Wang Y."/>
            <person name="Shen Y."/>
            <person name="Lu W."/>
            <person name="Wang J."/>
            <person name="Liu H."/>
            <person name="Yang J."/>
            <person name="Yang F."/>
            <person name="Zhang X."/>
            <person name="Zhang J."/>
            <person name="Yang G."/>
            <person name="Wu H."/>
            <person name="Qu D."/>
            <person name="Dong J."/>
            <person name="Sun L."/>
            <person name="Xue Y."/>
            <person name="Zhao A."/>
            <person name="Gao Y."/>
            <person name="Zhu J."/>
            <person name="Kan B."/>
            <person name="Ding K."/>
            <person name="Chen S."/>
            <person name="Cheng H."/>
            <person name="Yao Z."/>
            <person name="He B."/>
            <person name="Chen R."/>
            <person name="Ma D."/>
            <person name="Qiang B."/>
            <person name="Wen Y."/>
            <person name="Hou Y."/>
            <person name="Yu J."/>
        </authorList>
    </citation>
    <scope>NUCLEOTIDE SEQUENCE [LARGE SCALE GENOMIC DNA]</scope>
    <source>
        <strain>301 / Serotype 2a</strain>
    </source>
</reference>
<reference key="2">
    <citation type="journal article" date="2003" name="Infect. Immun.">
        <title>Complete genome sequence and comparative genomics of Shigella flexneri serotype 2a strain 2457T.</title>
        <authorList>
            <person name="Wei J."/>
            <person name="Goldberg M.B."/>
            <person name="Burland V."/>
            <person name="Venkatesan M.M."/>
            <person name="Deng W."/>
            <person name="Fournier G."/>
            <person name="Mayhew G.F."/>
            <person name="Plunkett G. III"/>
            <person name="Rose D.J."/>
            <person name="Darling A."/>
            <person name="Mau B."/>
            <person name="Perna N.T."/>
            <person name="Payne S.M."/>
            <person name="Runyen-Janecky L.J."/>
            <person name="Zhou S."/>
            <person name="Schwartz D.C."/>
            <person name="Blattner F.R."/>
        </authorList>
    </citation>
    <scope>NUCLEOTIDE SEQUENCE [LARGE SCALE GENOMIC DNA]</scope>
    <source>
        <strain>ATCC 700930 / 2457T / Serotype 2a</strain>
    </source>
</reference>
<evidence type="ECO:0000255" key="1">
    <source>
        <dbReference type="HAMAP-Rule" id="MF_00743"/>
    </source>
</evidence>
<sequence>MNTVRSEKDSMGAIDVPADKLWGAQTQRSLEHFRISTEKMPTSLIHALALTKRAAAKVNEDLDLLSEEKASAIRQAADEVLAGQHDDEFPLAIWQTGSGTQSNMNMNEVLANRASELLGGVRGMERKVHPNDDVNKSQSSNDVFPTAMHVAALLALRKQLIPQLKTLTQTLSEKSRAFADIVKIGRTHLQDATPLTLGQEISGWVAMLEHNLKHIEYSLPHVAELALGGTAVGTGLNTHPEYARRVADELAVITCAPFVTAPNKFEALATCDALVQAHGALKGLAASLMKIANDVRWLASGPRCGIGEISIPENEPGSSIMPGKVNPTQCEALTMLCCQVMGNDVAINMGGASGNFELNVFRPMVIHNFLQSVRLLADGMESFNKHCAVGIEPNRERINQLLNESLMLVTALNTHIGYDKAAEIAKKAHKEGLTLKAAALALGYLSEAEFDSWVRPEQMVGSMKAGR</sequence>
<protein>
    <recommendedName>
        <fullName evidence="1">Fumarate hydratase class II</fullName>
        <shortName evidence="1">Fumarase C</shortName>
        <ecNumber evidence="1">4.2.1.2</ecNumber>
    </recommendedName>
    <alternativeName>
        <fullName evidence="1">Aerobic fumarase</fullName>
    </alternativeName>
    <alternativeName>
        <fullName evidence="1">Iron-independent fumarase</fullName>
    </alternativeName>
</protein>
<dbReference type="EC" id="4.2.1.2" evidence="1"/>
<dbReference type="EMBL" id="AE005674">
    <property type="protein sequence ID" value="AAN43217.1"/>
    <property type="molecule type" value="Genomic_DNA"/>
</dbReference>
<dbReference type="EMBL" id="AE014073">
    <property type="protein sequence ID" value="AAP17104.1"/>
    <property type="molecule type" value="Genomic_DNA"/>
</dbReference>
<dbReference type="RefSeq" id="NP_707510.1">
    <property type="nucleotide sequence ID" value="NC_004337.2"/>
</dbReference>
<dbReference type="RefSeq" id="WP_001099068.1">
    <property type="nucleotide sequence ID" value="NZ_WPGW01000024.1"/>
</dbReference>
<dbReference type="SMR" id="Q83ML8"/>
<dbReference type="STRING" id="198214.SF1634"/>
<dbReference type="PaxDb" id="198214-SF1634"/>
<dbReference type="GeneID" id="1027791"/>
<dbReference type="KEGG" id="sfl:SF1634"/>
<dbReference type="KEGG" id="sfx:S1765"/>
<dbReference type="PATRIC" id="fig|198214.7.peg.1927"/>
<dbReference type="HOGENOM" id="CLU_021594_4_1_6"/>
<dbReference type="UniPathway" id="UPA00223">
    <property type="reaction ID" value="UER01007"/>
</dbReference>
<dbReference type="Proteomes" id="UP000001006">
    <property type="component" value="Chromosome"/>
</dbReference>
<dbReference type="Proteomes" id="UP000002673">
    <property type="component" value="Chromosome"/>
</dbReference>
<dbReference type="GO" id="GO:0005737">
    <property type="term" value="C:cytoplasm"/>
    <property type="evidence" value="ECO:0007669"/>
    <property type="project" value="UniProtKB-SubCell"/>
</dbReference>
<dbReference type="GO" id="GO:0004333">
    <property type="term" value="F:fumarate hydratase activity"/>
    <property type="evidence" value="ECO:0007669"/>
    <property type="project" value="UniProtKB-UniRule"/>
</dbReference>
<dbReference type="GO" id="GO:0006106">
    <property type="term" value="P:fumarate metabolic process"/>
    <property type="evidence" value="ECO:0007669"/>
    <property type="project" value="InterPro"/>
</dbReference>
<dbReference type="GO" id="GO:0006108">
    <property type="term" value="P:malate metabolic process"/>
    <property type="evidence" value="ECO:0007669"/>
    <property type="project" value="TreeGrafter"/>
</dbReference>
<dbReference type="GO" id="GO:0006099">
    <property type="term" value="P:tricarboxylic acid cycle"/>
    <property type="evidence" value="ECO:0007669"/>
    <property type="project" value="UniProtKB-UniRule"/>
</dbReference>
<dbReference type="CDD" id="cd01362">
    <property type="entry name" value="Fumarase_classII"/>
    <property type="match status" value="1"/>
</dbReference>
<dbReference type="FunFam" id="1.10.40.30:FF:000002">
    <property type="entry name" value="Fumarate hydratase class II"/>
    <property type="match status" value="1"/>
</dbReference>
<dbReference type="FunFam" id="1.10.275.10:FF:000001">
    <property type="entry name" value="Fumarate hydratase, mitochondrial"/>
    <property type="match status" value="1"/>
</dbReference>
<dbReference type="FunFam" id="1.20.200.10:FF:000001">
    <property type="entry name" value="Fumarate hydratase, mitochondrial"/>
    <property type="match status" value="1"/>
</dbReference>
<dbReference type="Gene3D" id="1.10.40.30">
    <property type="entry name" value="Fumarase/aspartase (C-terminal domain)"/>
    <property type="match status" value="1"/>
</dbReference>
<dbReference type="Gene3D" id="1.20.200.10">
    <property type="entry name" value="Fumarase/aspartase (Central domain)"/>
    <property type="match status" value="1"/>
</dbReference>
<dbReference type="Gene3D" id="1.10.275.10">
    <property type="entry name" value="Fumarase/aspartase (N-terminal domain)"/>
    <property type="match status" value="1"/>
</dbReference>
<dbReference type="HAMAP" id="MF_00743">
    <property type="entry name" value="FumaraseC"/>
    <property type="match status" value="1"/>
</dbReference>
<dbReference type="InterPro" id="IPR005677">
    <property type="entry name" value="Fum_hydII"/>
</dbReference>
<dbReference type="InterPro" id="IPR024083">
    <property type="entry name" value="Fumarase/histidase_N"/>
</dbReference>
<dbReference type="InterPro" id="IPR018951">
    <property type="entry name" value="Fumarase_C_C"/>
</dbReference>
<dbReference type="InterPro" id="IPR020557">
    <property type="entry name" value="Fumarate_lyase_CS"/>
</dbReference>
<dbReference type="InterPro" id="IPR000362">
    <property type="entry name" value="Fumarate_lyase_fam"/>
</dbReference>
<dbReference type="InterPro" id="IPR022761">
    <property type="entry name" value="Fumarate_lyase_N"/>
</dbReference>
<dbReference type="InterPro" id="IPR008948">
    <property type="entry name" value="L-Aspartase-like"/>
</dbReference>
<dbReference type="NCBIfam" id="TIGR00979">
    <property type="entry name" value="fumC_II"/>
    <property type="match status" value="1"/>
</dbReference>
<dbReference type="NCBIfam" id="NF008909">
    <property type="entry name" value="PRK12273.1"/>
    <property type="match status" value="1"/>
</dbReference>
<dbReference type="PANTHER" id="PTHR11444">
    <property type="entry name" value="ASPARTATEAMMONIA/ARGININOSUCCINATE/ADENYLOSUCCINATE LYASE"/>
    <property type="match status" value="1"/>
</dbReference>
<dbReference type="PANTHER" id="PTHR11444:SF1">
    <property type="entry name" value="FUMARATE HYDRATASE, MITOCHONDRIAL"/>
    <property type="match status" value="1"/>
</dbReference>
<dbReference type="Pfam" id="PF10415">
    <property type="entry name" value="FumaraseC_C"/>
    <property type="match status" value="1"/>
</dbReference>
<dbReference type="Pfam" id="PF00206">
    <property type="entry name" value="Lyase_1"/>
    <property type="match status" value="1"/>
</dbReference>
<dbReference type="PRINTS" id="PR00149">
    <property type="entry name" value="FUMRATELYASE"/>
</dbReference>
<dbReference type="SUPFAM" id="SSF48557">
    <property type="entry name" value="L-aspartase-like"/>
    <property type="match status" value="1"/>
</dbReference>
<dbReference type="PROSITE" id="PS00163">
    <property type="entry name" value="FUMARATE_LYASES"/>
    <property type="match status" value="1"/>
</dbReference>
<organism>
    <name type="scientific">Shigella flexneri</name>
    <dbReference type="NCBI Taxonomy" id="623"/>
    <lineage>
        <taxon>Bacteria</taxon>
        <taxon>Pseudomonadati</taxon>
        <taxon>Pseudomonadota</taxon>
        <taxon>Gammaproteobacteria</taxon>
        <taxon>Enterobacterales</taxon>
        <taxon>Enterobacteriaceae</taxon>
        <taxon>Shigella</taxon>
    </lineage>
</organism>
<feature type="chain" id="PRO_0000161310" description="Fumarate hydratase class II">
    <location>
        <begin position="1"/>
        <end position="467"/>
    </location>
</feature>
<feature type="active site" description="Proton donor/acceptor" evidence="1">
    <location>
        <position position="188"/>
    </location>
</feature>
<feature type="active site" evidence="1">
    <location>
        <position position="318"/>
    </location>
</feature>
<feature type="binding site" evidence="1">
    <location>
        <begin position="98"/>
        <end position="100"/>
    </location>
    <ligand>
        <name>substrate</name>
    </ligand>
</feature>
<feature type="binding site" evidence="1">
    <location>
        <position position="126"/>
    </location>
    <ligand>
        <name>substrate</name>
    </ligand>
</feature>
<feature type="binding site" description="in site B" evidence="1">
    <location>
        <begin position="129"/>
        <end position="132"/>
    </location>
    <ligand>
        <name>substrate</name>
    </ligand>
</feature>
<feature type="binding site" evidence="1">
    <location>
        <begin position="139"/>
        <end position="141"/>
    </location>
    <ligand>
        <name>substrate</name>
    </ligand>
</feature>
<feature type="binding site" evidence="1">
    <location>
        <position position="187"/>
    </location>
    <ligand>
        <name>substrate</name>
    </ligand>
</feature>
<feature type="binding site" evidence="1">
    <location>
        <position position="319"/>
    </location>
    <ligand>
        <name>substrate</name>
    </ligand>
</feature>
<feature type="binding site" evidence="1">
    <location>
        <begin position="324"/>
        <end position="326"/>
    </location>
    <ligand>
        <name>substrate</name>
    </ligand>
</feature>
<feature type="site" description="Important for catalytic activity" evidence="1">
    <location>
        <position position="331"/>
    </location>
</feature>
<keyword id="KW-0963">Cytoplasm</keyword>
<keyword id="KW-0456">Lyase</keyword>
<keyword id="KW-1185">Reference proteome</keyword>
<keyword id="KW-0816">Tricarboxylic acid cycle</keyword>
<name>FUMC_SHIFL</name>
<comment type="function">
    <text evidence="1">Involved in the TCA cycle. Catalyzes the stereospecific interconversion of fumarate to L-malate.</text>
</comment>
<comment type="catalytic activity">
    <reaction evidence="1">
        <text>(S)-malate = fumarate + H2O</text>
        <dbReference type="Rhea" id="RHEA:12460"/>
        <dbReference type="ChEBI" id="CHEBI:15377"/>
        <dbReference type="ChEBI" id="CHEBI:15589"/>
        <dbReference type="ChEBI" id="CHEBI:29806"/>
        <dbReference type="EC" id="4.2.1.2"/>
    </reaction>
</comment>
<comment type="pathway">
    <text evidence="1">Carbohydrate metabolism; tricarboxylic acid cycle; (S)-malate from fumarate: step 1/1.</text>
</comment>
<comment type="subunit">
    <text evidence="1">Homotetramer.</text>
</comment>
<comment type="subcellular location">
    <subcellularLocation>
        <location evidence="1">Cytoplasm</location>
    </subcellularLocation>
</comment>
<comment type="miscellaneous">
    <text evidence="1">There are 2 substrate-binding sites: the catalytic A site, and the non-catalytic B site that may play a role in the transfer of substrate or product between the active site and the solvent. Alternatively, the B site may bind allosteric effectors.</text>
</comment>
<comment type="similarity">
    <text evidence="1">Belongs to the class-II fumarase/aspartase family. Fumarase subfamily.</text>
</comment>